<comment type="similarity">
    <text evidence="1">Belongs to the SIMIBI class G3E GTPase family. ArgK/MeaB subfamily.</text>
</comment>
<name>YMU3_STRVG</name>
<dbReference type="EMBL" id="L10064">
    <property type="protein sequence ID" value="AAA03042.1"/>
    <property type="molecule type" value="Unassigned_DNA"/>
</dbReference>
<dbReference type="PIR" id="C40595">
    <property type="entry name" value="C40595"/>
</dbReference>
<dbReference type="SMR" id="Q05072"/>
<dbReference type="GO" id="GO:0005737">
    <property type="term" value="C:cytoplasm"/>
    <property type="evidence" value="ECO:0007669"/>
    <property type="project" value="TreeGrafter"/>
</dbReference>
<dbReference type="GO" id="GO:0005525">
    <property type="term" value="F:GTP binding"/>
    <property type="evidence" value="ECO:0007669"/>
    <property type="project" value="InterPro"/>
</dbReference>
<dbReference type="GO" id="GO:0003924">
    <property type="term" value="F:GTPase activity"/>
    <property type="evidence" value="ECO:0007669"/>
    <property type="project" value="InterPro"/>
</dbReference>
<dbReference type="Gene3D" id="1.20.5.170">
    <property type="match status" value="1"/>
</dbReference>
<dbReference type="Gene3D" id="3.40.50.300">
    <property type="entry name" value="P-loop containing nucleotide triphosphate hydrolases"/>
    <property type="match status" value="1"/>
</dbReference>
<dbReference type="InterPro" id="IPR005129">
    <property type="entry name" value="GTPase_ArgK"/>
</dbReference>
<dbReference type="InterPro" id="IPR027417">
    <property type="entry name" value="P-loop_NTPase"/>
</dbReference>
<dbReference type="PANTHER" id="PTHR23408:SF3">
    <property type="entry name" value="METHYLMALONIC ACIDURIA TYPE A PROTEIN, MITOCHONDRIAL"/>
    <property type="match status" value="1"/>
</dbReference>
<dbReference type="PANTHER" id="PTHR23408">
    <property type="entry name" value="METHYLMALONYL-COA MUTASE"/>
    <property type="match status" value="1"/>
</dbReference>
<dbReference type="Pfam" id="PF03308">
    <property type="entry name" value="MeaB"/>
    <property type="match status" value="1"/>
</dbReference>
<dbReference type="SUPFAM" id="SSF52540">
    <property type="entry name" value="P-loop containing nucleoside triphosphate hydrolases"/>
    <property type="match status" value="1"/>
</dbReference>
<feature type="chain" id="PRO_0000157819" description="Uncharacterized protein in mutB 3'region">
    <location>
        <begin position="1"/>
        <end position="93" status="greater than"/>
    </location>
</feature>
<feature type="non-terminal residue">
    <location>
        <position position="93"/>
    </location>
</feature>
<reference key="1">
    <citation type="journal article" date="1993" name="J. Bacteriol.">
        <title>Cloning, sequencing, and expression of the gene encoding methylmalonyl-coenzyme A mutase from Streptomyces cinnamonensis.</title>
        <authorList>
            <person name="Birch A."/>
            <person name="Leiser A."/>
            <person name="Robinson J.A."/>
        </authorList>
    </citation>
    <scope>NUCLEOTIDE SEQUENCE [GENOMIC DNA]</scope>
    <source>
        <strain>A3823.5</strain>
    </source>
</reference>
<proteinExistence type="inferred from homology"/>
<accession>Q05072</accession>
<protein>
    <recommendedName>
        <fullName>Uncharacterized protein in mutB 3'region</fullName>
    </recommendedName>
    <alternativeName>
        <fullName>ORF-C</fullName>
    </alternativeName>
</protein>
<organism>
    <name type="scientific">Streptomyces virginiae</name>
    <name type="common">Streptomyces cinnamonensis</name>
    <dbReference type="NCBI Taxonomy" id="1961"/>
    <lineage>
        <taxon>Bacteria</taxon>
        <taxon>Bacillati</taxon>
        <taxon>Actinomycetota</taxon>
        <taxon>Actinomycetes</taxon>
        <taxon>Kitasatosporales</taxon>
        <taxon>Streptomycetaceae</taxon>
        <taxon>Streptomyces</taxon>
    </lineage>
</organism>
<sequence length="93" mass="9858">MARAITLVESTRPQHRALAQELLTELLPHSGRARRVGISGVPGVGKSTFIDALGVMLTSLGHRVAVLAVDPSSTRTGGSILGDKTRMERLSLD</sequence>
<evidence type="ECO:0000305" key="1"/>